<dbReference type="EC" id="6.3.4.4" evidence="1"/>
<dbReference type="EMBL" id="CP000435">
    <property type="protein sequence ID" value="ABI45538.1"/>
    <property type="molecule type" value="Genomic_DNA"/>
</dbReference>
<dbReference type="SMR" id="Q0I8J6"/>
<dbReference type="STRING" id="64471.sync_2023"/>
<dbReference type="KEGG" id="syg:sync_2023"/>
<dbReference type="eggNOG" id="COG0104">
    <property type="taxonomic scope" value="Bacteria"/>
</dbReference>
<dbReference type="HOGENOM" id="CLU_029848_0_0_3"/>
<dbReference type="OrthoDB" id="9807553at2"/>
<dbReference type="UniPathway" id="UPA00075">
    <property type="reaction ID" value="UER00335"/>
</dbReference>
<dbReference type="Proteomes" id="UP000001961">
    <property type="component" value="Chromosome"/>
</dbReference>
<dbReference type="GO" id="GO:0005737">
    <property type="term" value="C:cytoplasm"/>
    <property type="evidence" value="ECO:0007669"/>
    <property type="project" value="UniProtKB-SubCell"/>
</dbReference>
<dbReference type="GO" id="GO:0004019">
    <property type="term" value="F:adenylosuccinate synthase activity"/>
    <property type="evidence" value="ECO:0007669"/>
    <property type="project" value="UniProtKB-UniRule"/>
</dbReference>
<dbReference type="GO" id="GO:0005525">
    <property type="term" value="F:GTP binding"/>
    <property type="evidence" value="ECO:0007669"/>
    <property type="project" value="UniProtKB-UniRule"/>
</dbReference>
<dbReference type="GO" id="GO:0000287">
    <property type="term" value="F:magnesium ion binding"/>
    <property type="evidence" value="ECO:0007669"/>
    <property type="project" value="UniProtKB-UniRule"/>
</dbReference>
<dbReference type="GO" id="GO:0044208">
    <property type="term" value="P:'de novo' AMP biosynthetic process"/>
    <property type="evidence" value="ECO:0007669"/>
    <property type="project" value="UniProtKB-UniRule"/>
</dbReference>
<dbReference type="GO" id="GO:0046040">
    <property type="term" value="P:IMP metabolic process"/>
    <property type="evidence" value="ECO:0007669"/>
    <property type="project" value="TreeGrafter"/>
</dbReference>
<dbReference type="CDD" id="cd03108">
    <property type="entry name" value="AdSS"/>
    <property type="match status" value="1"/>
</dbReference>
<dbReference type="FunFam" id="1.10.300.10:FF:000001">
    <property type="entry name" value="Adenylosuccinate synthetase"/>
    <property type="match status" value="1"/>
</dbReference>
<dbReference type="FunFam" id="3.90.170.10:FF:000001">
    <property type="entry name" value="Adenylosuccinate synthetase"/>
    <property type="match status" value="1"/>
</dbReference>
<dbReference type="Gene3D" id="3.40.440.10">
    <property type="entry name" value="Adenylosuccinate Synthetase, subunit A, domain 1"/>
    <property type="match status" value="1"/>
</dbReference>
<dbReference type="Gene3D" id="1.10.300.10">
    <property type="entry name" value="Adenylosuccinate Synthetase, subunit A, domain 2"/>
    <property type="match status" value="1"/>
</dbReference>
<dbReference type="Gene3D" id="3.90.170.10">
    <property type="entry name" value="Adenylosuccinate Synthetase, subunit A, domain 3"/>
    <property type="match status" value="1"/>
</dbReference>
<dbReference type="HAMAP" id="MF_00011">
    <property type="entry name" value="Adenylosucc_synth"/>
    <property type="match status" value="1"/>
</dbReference>
<dbReference type="InterPro" id="IPR018220">
    <property type="entry name" value="Adenylosuccin_syn_GTP-bd"/>
</dbReference>
<dbReference type="InterPro" id="IPR033128">
    <property type="entry name" value="Adenylosuccin_syn_Lys_AS"/>
</dbReference>
<dbReference type="InterPro" id="IPR042109">
    <property type="entry name" value="Adenylosuccinate_synth_dom1"/>
</dbReference>
<dbReference type="InterPro" id="IPR042110">
    <property type="entry name" value="Adenylosuccinate_synth_dom2"/>
</dbReference>
<dbReference type="InterPro" id="IPR042111">
    <property type="entry name" value="Adenylosuccinate_synth_dom3"/>
</dbReference>
<dbReference type="InterPro" id="IPR001114">
    <property type="entry name" value="Adenylosuccinate_synthetase"/>
</dbReference>
<dbReference type="InterPro" id="IPR027417">
    <property type="entry name" value="P-loop_NTPase"/>
</dbReference>
<dbReference type="NCBIfam" id="NF002223">
    <property type="entry name" value="PRK01117.1"/>
    <property type="match status" value="1"/>
</dbReference>
<dbReference type="NCBIfam" id="TIGR00184">
    <property type="entry name" value="purA"/>
    <property type="match status" value="1"/>
</dbReference>
<dbReference type="PANTHER" id="PTHR11846">
    <property type="entry name" value="ADENYLOSUCCINATE SYNTHETASE"/>
    <property type="match status" value="1"/>
</dbReference>
<dbReference type="PANTHER" id="PTHR11846:SF0">
    <property type="entry name" value="ADENYLOSUCCINATE SYNTHETASE"/>
    <property type="match status" value="1"/>
</dbReference>
<dbReference type="Pfam" id="PF00709">
    <property type="entry name" value="Adenylsucc_synt"/>
    <property type="match status" value="1"/>
</dbReference>
<dbReference type="SMART" id="SM00788">
    <property type="entry name" value="Adenylsucc_synt"/>
    <property type="match status" value="1"/>
</dbReference>
<dbReference type="SUPFAM" id="SSF52540">
    <property type="entry name" value="P-loop containing nucleoside triphosphate hydrolases"/>
    <property type="match status" value="1"/>
</dbReference>
<dbReference type="PROSITE" id="PS01266">
    <property type="entry name" value="ADENYLOSUCCIN_SYN_1"/>
    <property type="match status" value="1"/>
</dbReference>
<dbReference type="PROSITE" id="PS00513">
    <property type="entry name" value="ADENYLOSUCCIN_SYN_2"/>
    <property type="match status" value="1"/>
</dbReference>
<comment type="function">
    <text evidence="1">Plays an important role in the de novo pathway of purine nucleotide biosynthesis. Catalyzes the first committed step in the biosynthesis of AMP from IMP.</text>
</comment>
<comment type="catalytic activity">
    <reaction evidence="1">
        <text>IMP + L-aspartate + GTP = N(6)-(1,2-dicarboxyethyl)-AMP + GDP + phosphate + 2 H(+)</text>
        <dbReference type="Rhea" id="RHEA:15753"/>
        <dbReference type="ChEBI" id="CHEBI:15378"/>
        <dbReference type="ChEBI" id="CHEBI:29991"/>
        <dbReference type="ChEBI" id="CHEBI:37565"/>
        <dbReference type="ChEBI" id="CHEBI:43474"/>
        <dbReference type="ChEBI" id="CHEBI:57567"/>
        <dbReference type="ChEBI" id="CHEBI:58053"/>
        <dbReference type="ChEBI" id="CHEBI:58189"/>
        <dbReference type="EC" id="6.3.4.4"/>
    </reaction>
</comment>
<comment type="cofactor">
    <cofactor evidence="1">
        <name>Mg(2+)</name>
        <dbReference type="ChEBI" id="CHEBI:18420"/>
    </cofactor>
    <text evidence="1">Binds 1 Mg(2+) ion per subunit.</text>
</comment>
<comment type="pathway">
    <text evidence="1">Purine metabolism; AMP biosynthesis via de novo pathway; AMP from IMP: step 1/2.</text>
</comment>
<comment type="subunit">
    <text evidence="1">Homodimer.</text>
</comment>
<comment type="subcellular location">
    <subcellularLocation>
        <location evidence="1">Cytoplasm</location>
    </subcellularLocation>
</comment>
<comment type="similarity">
    <text evidence="1">Belongs to the adenylosuccinate synthetase family.</text>
</comment>
<protein>
    <recommendedName>
        <fullName evidence="1">Adenylosuccinate synthetase</fullName>
        <shortName evidence="1">AMPSase</shortName>
        <shortName evidence="1">AdSS</shortName>
        <ecNumber evidence="1">6.3.4.4</ecNumber>
    </recommendedName>
    <alternativeName>
        <fullName evidence="1">IMP--aspartate ligase</fullName>
    </alternativeName>
</protein>
<feature type="chain" id="PRO_1000000940" description="Adenylosuccinate synthetase">
    <location>
        <begin position="1"/>
        <end position="437"/>
    </location>
</feature>
<feature type="active site" description="Proton acceptor" evidence="1">
    <location>
        <position position="13"/>
    </location>
</feature>
<feature type="active site" description="Proton donor" evidence="1">
    <location>
        <position position="41"/>
    </location>
</feature>
<feature type="binding site" evidence="1">
    <location>
        <begin position="12"/>
        <end position="18"/>
    </location>
    <ligand>
        <name>GTP</name>
        <dbReference type="ChEBI" id="CHEBI:37565"/>
    </ligand>
</feature>
<feature type="binding site" description="in other chain" evidence="1">
    <location>
        <begin position="13"/>
        <end position="16"/>
    </location>
    <ligand>
        <name>IMP</name>
        <dbReference type="ChEBI" id="CHEBI:58053"/>
        <note>ligand shared between dimeric partners</note>
    </ligand>
</feature>
<feature type="binding site" evidence="1">
    <location>
        <position position="13"/>
    </location>
    <ligand>
        <name>Mg(2+)</name>
        <dbReference type="ChEBI" id="CHEBI:18420"/>
    </ligand>
</feature>
<feature type="binding site" description="in other chain" evidence="1">
    <location>
        <begin position="38"/>
        <end position="41"/>
    </location>
    <ligand>
        <name>IMP</name>
        <dbReference type="ChEBI" id="CHEBI:58053"/>
        <note>ligand shared between dimeric partners</note>
    </ligand>
</feature>
<feature type="binding site" evidence="1">
    <location>
        <begin position="40"/>
        <end position="42"/>
    </location>
    <ligand>
        <name>GTP</name>
        <dbReference type="ChEBI" id="CHEBI:37565"/>
    </ligand>
</feature>
<feature type="binding site" evidence="1">
    <location>
        <position position="40"/>
    </location>
    <ligand>
        <name>Mg(2+)</name>
        <dbReference type="ChEBI" id="CHEBI:18420"/>
    </ligand>
</feature>
<feature type="binding site" description="in other chain" evidence="1">
    <location>
        <position position="128"/>
    </location>
    <ligand>
        <name>IMP</name>
        <dbReference type="ChEBI" id="CHEBI:58053"/>
        <note>ligand shared between dimeric partners</note>
    </ligand>
</feature>
<feature type="binding site" evidence="1">
    <location>
        <position position="142"/>
    </location>
    <ligand>
        <name>IMP</name>
        <dbReference type="ChEBI" id="CHEBI:58053"/>
        <note>ligand shared between dimeric partners</note>
    </ligand>
</feature>
<feature type="binding site" description="in other chain" evidence="1">
    <location>
        <position position="223"/>
    </location>
    <ligand>
        <name>IMP</name>
        <dbReference type="ChEBI" id="CHEBI:58053"/>
        <note>ligand shared between dimeric partners</note>
    </ligand>
</feature>
<feature type="binding site" description="in other chain" evidence="1">
    <location>
        <position position="238"/>
    </location>
    <ligand>
        <name>IMP</name>
        <dbReference type="ChEBI" id="CHEBI:58053"/>
        <note>ligand shared between dimeric partners</note>
    </ligand>
</feature>
<feature type="binding site" evidence="1">
    <location>
        <begin position="298"/>
        <end position="304"/>
    </location>
    <ligand>
        <name>substrate</name>
    </ligand>
</feature>
<feature type="binding site" description="in other chain" evidence="1">
    <location>
        <position position="302"/>
    </location>
    <ligand>
        <name>IMP</name>
        <dbReference type="ChEBI" id="CHEBI:58053"/>
        <note>ligand shared between dimeric partners</note>
    </ligand>
</feature>
<feature type="binding site" evidence="1">
    <location>
        <position position="304"/>
    </location>
    <ligand>
        <name>GTP</name>
        <dbReference type="ChEBI" id="CHEBI:37565"/>
    </ligand>
</feature>
<feature type="binding site" evidence="1">
    <location>
        <begin position="330"/>
        <end position="332"/>
    </location>
    <ligand>
        <name>GTP</name>
        <dbReference type="ChEBI" id="CHEBI:37565"/>
    </ligand>
</feature>
<feature type="binding site" evidence="1">
    <location>
        <begin position="412"/>
        <end position="414"/>
    </location>
    <ligand>
        <name>GTP</name>
        <dbReference type="ChEBI" id="CHEBI:37565"/>
    </ligand>
</feature>
<evidence type="ECO:0000255" key="1">
    <source>
        <dbReference type="HAMAP-Rule" id="MF_00011"/>
    </source>
</evidence>
<name>PURA_SYNS3</name>
<gene>
    <name evidence="1" type="primary">purA</name>
    <name type="ordered locus">sync_2023</name>
</gene>
<accession>Q0I8J6</accession>
<organism>
    <name type="scientific">Synechococcus sp. (strain CC9311)</name>
    <dbReference type="NCBI Taxonomy" id="64471"/>
    <lineage>
        <taxon>Bacteria</taxon>
        <taxon>Bacillati</taxon>
        <taxon>Cyanobacteriota</taxon>
        <taxon>Cyanophyceae</taxon>
        <taxon>Synechococcales</taxon>
        <taxon>Synechococcaceae</taxon>
        <taxon>Synechococcus</taxon>
    </lineage>
</organism>
<sequence>MANVVVIGAQWGDEGKGKITDLLSRSADVVVRYQGGVNAGHTIVVDGRVLKLHLIPSGILYPDTTCLIGSGTVVDPKVMLGELDMLISNGIDISGLQLASTAHITMPYHRLLDLAMEKQRGERKIGTTGRGIGPTYADKSQRSGIRVLDLLDEARLRDRLEGPLSEKNQLLETIYGEKPLDPEEIIREYLAYGKRLAPHVVDCTRAIHEAASDRKNILFEGAQGTLLDLDHGTYPYVTSSNPVSGGACIGAGVGPTLIDRVIGVAKAYTTRVGEGPFPTELSGSLNDQLCDRGGEFGTTTGRRRRCGWFDGVIGRYAVQVNGLDCLAITKLDVLDEMDKIQVSVAYELDGERIDYFPSCSEDFARCKPIFETLPGWQCSTAECRRLEDLPAPAMDYLRFLADLMDVPIAIVSLGASRDQTIVVEDPIHGPKRALLSA</sequence>
<proteinExistence type="inferred from homology"/>
<keyword id="KW-0963">Cytoplasm</keyword>
<keyword id="KW-0342">GTP-binding</keyword>
<keyword id="KW-0436">Ligase</keyword>
<keyword id="KW-0460">Magnesium</keyword>
<keyword id="KW-0479">Metal-binding</keyword>
<keyword id="KW-0547">Nucleotide-binding</keyword>
<keyword id="KW-0658">Purine biosynthesis</keyword>
<keyword id="KW-1185">Reference proteome</keyword>
<reference key="1">
    <citation type="journal article" date="2006" name="Proc. Natl. Acad. Sci. U.S.A.">
        <title>Genome sequence of Synechococcus CC9311: insights into adaptation to a coastal environment.</title>
        <authorList>
            <person name="Palenik B."/>
            <person name="Ren Q."/>
            <person name="Dupont C.L."/>
            <person name="Myers G.S."/>
            <person name="Heidelberg J.F."/>
            <person name="Badger J.H."/>
            <person name="Madupu R."/>
            <person name="Nelson W.C."/>
            <person name="Brinkac L.M."/>
            <person name="Dodson R.J."/>
            <person name="Durkin A.S."/>
            <person name="Daugherty S.C."/>
            <person name="Sullivan S.A."/>
            <person name="Khouri H."/>
            <person name="Mohamoud Y."/>
            <person name="Halpin R."/>
            <person name="Paulsen I.T."/>
        </authorList>
    </citation>
    <scope>NUCLEOTIDE SEQUENCE [LARGE SCALE GENOMIC DNA]</scope>
    <source>
        <strain>CC9311</strain>
    </source>
</reference>